<name>YO09_BPL2</name>
<organismHost>
    <name type="scientific">Mycoplasma</name>
    <dbReference type="NCBI Taxonomy" id="2093"/>
</organismHost>
<proteinExistence type="predicted"/>
<accession>P42544</accession>
<feature type="chain" id="PRO_0000066355" description="Uncharacterized 9.3 kDa protein">
    <location>
        <begin position="1"/>
        <end position="78"/>
    </location>
</feature>
<sequence length="78" mass="9333">MDVKSTEYLQFVKVKWPGKKTYDIEVLNKDGSLTLGYIKWWGPWWTYTFHTISNIVLDPKCLNTITSYINQLMEERKQ</sequence>
<dbReference type="EMBL" id="L13696">
    <property type="protein sequence ID" value="AAA87965.1"/>
    <property type="molecule type" value="Genomic_DNA"/>
</dbReference>
<dbReference type="RefSeq" id="NP_040817.1">
    <property type="nucleotide sequence ID" value="NC_001447.1"/>
</dbReference>
<dbReference type="GeneID" id="1261014"/>
<dbReference type="KEGG" id="vg:1261014"/>
<dbReference type="Proteomes" id="UP000001573">
    <property type="component" value="Genome"/>
</dbReference>
<protein>
    <recommendedName>
        <fullName>Uncharacterized 9.3 kDa protein</fullName>
    </recommendedName>
    <alternativeName>
        <fullName>ORF9</fullName>
    </alternativeName>
</protein>
<keyword id="KW-1185">Reference proteome</keyword>
<reference key="1">
    <citation type="journal article" date="1994" name="Gene">
        <title>Sequence analysis of a unique temperature phage: mycoplasma virus L2.</title>
        <authorList>
            <person name="Maniloff J."/>
            <person name="Kampo G.J."/>
            <person name="Dascher C.C."/>
        </authorList>
    </citation>
    <scope>NUCLEOTIDE SEQUENCE [LARGE SCALE GENOMIC DNA]</scope>
</reference>
<organism>
    <name type="scientific">Acholeplasma phage L2</name>
    <name type="common">Bacteriophage L2</name>
    <dbReference type="NCBI Taxonomy" id="46014"/>
    <lineage>
        <taxon>Viruses</taxon>
        <taxon>Viruses incertae sedis</taxon>
        <taxon>Plasmaviridae</taxon>
        <taxon>Plasmavirus</taxon>
    </lineage>
</organism>